<name>HEMH_VIBVU</name>
<evidence type="ECO:0000255" key="1">
    <source>
        <dbReference type="HAMAP-Rule" id="MF_00323"/>
    </source>
</evidence>
<evidence type="ECO:0000305" key="2"/>
<organism>
    <name type="scientific">Vibrio vulnificus (strain CMCP6)</name>
    <dbReference type="NCBI Taxonomy" id="216895"/>
    <lineage>
        <taxon>Bacteria</taxon>
        <taxon>Pseudomonadati</taxon>
        <taxon>Pseudomonadota</taxon>
        <taxon>Gammaproteobacteria</taxon>
        <taxon>Vibrionales</taxon>
        <taxon>Vibrionaceae</taxon>
        <taxon>Vibrio</taxon>
    </lineage>
</organism>
<feature type="chain" id="PRO_0000175224" description="Ferrochelatase">
    <location>
        <begin position="1"/>
        <end position="319"/>
    </location>
</feature>
<feature type="binding site" evidence="1">
    <location>
        <position position="194"/>
    </location>
    <ligand>
        <name>Fe cation</name>
        <dbReference type="ChEBI" id="CHEBI:24875"/>
    </ligand>
</feature>
<feature type="binding site" evidence="1">
    <location>
        <position position="275"/>
    </location>
    <ligand>
        <name>Fe cation</name>
        <dbReference type="ChEBI" id="CHEBI:24875"/>
    </ligand>
</feature>
<accession>Q8DFM2</accession>
<sequence>MNNTKKRGVLLVNLGTPEEATAPAVKRFLSQFLHDQRVVDMTRWLWCPILHGIILPIRSPKVAKLYQTVWMKEGSPLMVYSKRQQVELQAKLNCPVEIGMTYGTPSVLDGVNKLQAQGVDEICVLPLYPQYSGTTTGAAYDALAHALRKVAVVPSIQFIRDYHDHPLYIKALAESVRQSWQVQGKGDYLLCSYHGIPQRYADNGDVYPLHCEMTTELLRLELGLDKSQIGTTYQSRFGREEWLQPYTDKTLESLPAKGIKSLDVITPAFSVDCLETLEEISEQGQESFLHAGGEQYRFIPCLNDAPSHIEMMARLVTER</sequence>
<keyword id="KW-0963">Cytoplasm</keyword>
<keyword id="KW-0350">Heme biosynthesis</keyword>
<keyword id="KW-0408">Iron</keyword>
<keyword id="KW-0456">Lyase</keyword>
<keyword id="KW-0479">Metal-binding</keyword>
<keyword id="KW-0627">Porphyrin biosynthesis</keyword>
<reference key="1">
    <citation type="submission" date="2002-12" db="EMBL/GenBank/DDBJ databases">
        <title>Complete genome sequence of Vibrio vulnificus CMCP6.</title>
        <authorList>
            <person name="Rhee J.H."/>
            <person name="Kim S.Y."/>
            <person name="Chung S.S."/>
            <person name="Kim J.J."/>
            <person name="Moon Y.H."/>
            <person name="Jeong H."/>
            <person name="Choy H.E."/>
        </authorList>
    </citation>
    <scope>NUCLEOTIDE SEQUENCE [LARGE SCALE GENOMIC DNA]</scope>
    <source>
        <strain>CMCP6</strain>
    </source>
</reference>
<proteinExistence type="inferred from homology"/>
<protein>
    <recommendedName>
        <fullName evidence="1">Ferrochelatase</fullName>
        <ecNumber evidence="1">4.98.1.1</ecNumber>
    </recommendedName>
    <alternativeName>
        <fullName evidence="1">Heme synthase</fullName>
    </alternativeName>
    <alternativeName>
        <fullName evidence="1">Protoheme ferro-lyase</fullName>
    </alternativeName>
</protein>
<gene>
    <name evidence="1" type="primary">hemH</name>
    <name type="ordered locus">VV1_0187</name>
</gene>
<comment type="function">
    <text evidence="1">Catalyzes the ferrous insertion into protoporphyrin IX.</text>
</comment>
<comment type="catalytic activity">
    <reaction evidence="1">
        <text>heme b + 2 H(+) = protoporphyrin IX + Fe(2+)</text>
        <dbReference type="Rhea" id="RHEA:22584"/>
        <dbReference type="ChEBI" id="CHEBI:15378"/>
        <dbReference type="ChEBI" id="CHEBI:29033"/>
        <dbReference type="ChEBI" id="CHEBI:57306"/>
        <dbReference type="ChEBI" id="CHEBI:60344"/>
        <dbReference type="EC" id="4.98.1.1"/>
    </reaction>
</comment>
<comment type="pathway">
    <text evidence="1">Porphyrin-containing compound metabolism; protoheme biosynthesis; protoheme from protoporphyrin-IX: step 1/1.</text>
</comment>
<comment type="subcellular location">
    <subcellularLocation>
        <location evidence="1">Cytoplasm</location>
    </subcellularLocation>
</comment>
<comment type="similarity">
    <text evidence="1">Belongs to the ferrochelatase family.</text>
</comment>
<comment type="sequence caution" evidence="2">
    <conflict type="erroneous initiation">
        <sequence resource="EMBL-CDS" id="AAO08724"/>
    </conflict>
</comment>
<dbReference type="EC" id="4.98.1.1" evidence="1"/>
<dbReference type="EMBL" id="AE016795">
    <property type="protein sequence ID" value="AAO08724.1"/>
    <property type="status" value="ALT_INIT"/>
    <property type="molecule type" value="Genomic_DNA"/>
</dbReference>
<dbReference type="RefSeq" id="WP_165386963.1">
    <property type="nucleotide sequence ID" value="NC_004459.3"/>
</dbReference>
<dbReference type="SMR" id="Q8DFM2"/>
<dbReference type="KEGG" id="vvu:VV1_0187"/>
<dbReference type="HOGENOM" id="CLU_018884_0_0_6"/>
<dbReference type="UniPathway" id="UPA00252">
    <property type="reaction ID" value="UER00325"/>
</dbReference>
<dbReference type="Proteomes" id="UP000002275">
    <property type="component" value="Chromosome 1"/>
</dbReference>
<dbReference type="GO" id="GO:0005737">
    <property type="term" value="C:cytoplasm"/>
    <property type="evidence" value="ECO:0007669"/>
    <property type="project" value="UniProtKB-SubCell"/>
</dbReference>
<dbReference type="GO" id="GO:0004325">
    <property type="term" value="F:ferrochelatase activity"/>
    <property type="evidence" value="ECO:0007669"/>
    <property type="project" value="UniProtKB-UniRule"/>
</dbReference>
<dbReference type="GO" id="GO:0046872">
    <property type="term" value="F:metal ion binding"/>
    <property type="evidence" value="ECO:0007669"/>
    <property type="project" value="UniProtKB-KW"/>
</dbReference>
<dbReference type="GO" id="GO:0006783">
    <property type="term" value="P:heme biosynthetic process"/>
    <property type="evidence" value="ECO:0007669"/>
    <property type="project" value="UniProtKB-UniRule"/>
</dbReference>
<dbReference type="CDD" id="cd00419">
    <property type="entry name" value="Ferrochelatase_C"/>
    <property type="match status" value="1"/>
</dbReference>
<dbReference type="CDD" id="cd03411">
    <property type="entry name" value="Ferrochelatase_N"/>
    <property type="match status" value="1"/>
</dbReference>
<dbReference type="FunFam" id="3.40.50.1400:FF:000002">
    <property type="entry name" value="Ferrochelatase"/>
    <property type="match status" value="1"/>
</dbReference>
<dbReference type="Gene3D" id="3.40.50.1400">
    <property type="match status" value="2"/>
</dbReference>
<dbReference type="HAMAP" id="MF_00323">
    <property type="entry name" value="Ferrochelatase"/>
    <property type="match status" value="1"/>
</dbReference>
<dbReference type="InterPro" id="IPR001015">
    <property type="entry name" value="Ferrochelatase"/>
</dbReference>
<dbReference type="InterPro" id="IPR019772">
    <property type="entry name" value="Ferrochelatase_AS"/>
</dbReference>
<dbReference type="InterPro" id="IPR033644">
    <property type="entry name" value="Ferrochelatase_C"/>
</dbReference>
<dbReference type="InterPro" id="IPR033659">
    <property type="entry name" value="Ferrochelatase_N"/>
</dbReference>
<dbReference type="NCBIfam" id="TIGR00109">
    <property type="entry name" value="hemH"/>
    <property type="match status" value="1"/>
</dbReference>
<dbReference type="PANTHER" id="PTHR11108">
    <property type="entry name" value="FERROCHELATASE"/>
    <property type="match status" value="1"/>
</dbReference>
<dbReference type="PANTHER" id="PTHR11108:SF1">
    <property type="entry name" value="FERROCHELATASE, MITOCHONDRIAL"/>
    <property type="match status" value="1"/>
</dbReference>
<dbReference type="Pfam" id="PF00762">
    <property type="entry name" value="Ferrochelatase"/>
    <property type="match status" value="1"/>
</dbReference>
<dbReference type="SUPFAM" id="SSF53800">
    <property type="entry name" value="Chelatase"/>
    <property type="match status" value="1"/>
</dbReference>
<dbReference type="PROSITE" id="PS00534">
    <property type="entry name" value="FERROCHELATASE"/>
    <property type="match status" value="1"/>
</dbReference>